<sequence length="264" mass="28215">MSGSTITPWVVGNWKMNPMRANANQLIEEFKQLLQQNQIADENCHVGVAPVSIALTTVQAQLQDAARTVHTVAQDVSRVAGTGAYTGEVSAELLKDSQINFVLVGHSERRDIFGDNVEILKAKLQNALNAGMTVIYCVGESLEQREQGQAEQVVLQQICDIAPVVTAEQWQNQVVIAYEPIWAIGTGKTASPQDAQAMHAKIREGLCQLTPAGSNIAILYGGSVKAENAVELAACPDINGALVGGASLKAASFYQIVQAFAQSK</sequence>
<protein>
    <recommendedName>
        <fullName evidence="1">Triosephosphate isomerase</fullName>
        <shortName evidence="1">TIM</shortName>
        <shortName evidence="1">TPI</shortName>
        <ecNumber evidence="1">5.3.1.1</ecNumber>
    </recommendedName>
    <alternativeName>
        <fullName evidence="1">Triose-phosphate isomerase</fullName>
    </alternativeName>
</protein>
<name>TPIS_ACIBY</name>
<keyword id="KW-0963">Cytoplasm</keyword>
<keyword id="KW-0312">Gluconeogenesis</keyword>
<keyword id="KW-0324">Glycolysis</keyword>
<keyword id="KW-0413">Isomerase</keyword>
<feature type="chain" id="PRO_1000096470" description="Triosephosphate isomerase">
    <location>
        <begin position="1"/>
        <end position="264"/>
    </location>
</feature>
<feature type="active site" description="Electrophile" evidence="1">
    <location>
        <position position="106"/>
    </location>
</feature>
<feature type="active site" description="Proton acceptor" evidence="1">
    <location>
        <position position="179"/>
    </location>
</feature>
<feature type="binding site" evidence="1">
    <location>
        <begin position="13"/>
        <end position="15"/>
    </location>
    <ligand>
        <name>substrate</name>
    </ligand>
</feature>
<feature type="binding site" evidence="1">
    <location>
        <position position="185"/>
    </location>
    <ligand>
        <name>substrate</name>
    </ligand>
</feature>
<feature type="binding site" evidence="1">
    <location>
        <position position="223"/>
    </location>
    <ligand>
        <name>substrate</name>
    </ligand>
</feature>
<feature type="binding site" evidence="1">
    <location>
        <begin position="244"/>
        <end position="245"/>
    </location>
    <ligand>
        <name>substrate</name>
    </ligand>
</feature>
<evidence type="ECO:0000255" key="1">
    <source>
        <dbReference type="HAMAP-Rule" id="MF_00147"/>
    </source>
</evidence>
<organism>
    <name type="scientific">Acinetobacter baumannii (strain AYE)</name>
    <dbReference type="NCBI Taxonomy" id="509173"/>
    <lineage>
        <taxon>Bacteria</taxon>
        <taxon>Pseudomonadati</taxon>
        <taxon>Pseudomonadota</taxon>
        <taxon>Gammaproteobacteria</taxon>
        <taxon>Moraxellales</taxon>
        <taxon>Moraxellaceae</taxon>
        <taxon>Acinetobacter</taxon>
        <taxon>Acinetobacter calcoaceticus/baumannii complex</taxon>
    </lineage>
</organism>
<accession>B0VE65</accession>
<proteinExistence type="inferred from homology"/>
<comment type="function">
    <text evidence="1">Involved in the gluconeogenesis. Catalyzes stereospecifically the conversion of dihydroxyacetone phosphate (DHAP) to D-glyceraldehyde-3-phosphate (G3P).</text>
</comment>
<comment type="catalytic activity">
    <reaction evidence="1">
        <text>D-glyceraldehyde 3-phosphate = dihydroxyacetone phosphate</text>
        <dbReference type="Rhea" id="RHEA:18585"/>
        <dbReference type="ChEBI" id="CHEBI:57642"/>
        <dbReference type="ChEBI" id="CHEBI:59776"/>
        <dbReference type="EC" id="5.3.1.1"/>
    </reaction>
</comment>
<comment type="pathway">
    <text evidence="1">Carbohydrate biosynthesis; gluconeogenesis.</text>
</comment>
<comment type="pathway">
    <text evidence="1">Carbohydrate degradation; glycolysis; D-glyceraldehyde 3-phosphate from glycerone phosphate: step 1/1.</text>
</comment>
<comment type="subunit">
    <text evidence="1">Homodimer.</text>
</comment>
<comment type="subcellular location">
    <subcellularLocation>
        <location evidence="1">Cytoplasm</location>
    </subcellularLocation>
</comment>
<comment type="similarity">
    <text evidence="1">Belongs to the triosephosphate isomerase family.</text>
</comment>
<dbReference type="EC" id="5.3.1.1" evidence="1"/>
<dbReference type="EMBL" id="CU459141">
    <property type="protein sequence ID" value="CAM88235.1"/>
    <property type="molecule type" value="Genomic_DNA"/>
</dbReference>
<dbReference type="RefSeq" id="WP_000016931.1">
    <property type="nucleotide sequence ID" value="NZ_JBDGFB010000003.1"/>
</dbReference>
<dbReference type="SMR" id="B0VE65"/>
<dbReference type="EnsemblBacteria" id="CAM88235">
    <property type="protein sequence ID" value="CAM88235"/>
    <property type="gene ID" value="ABAYE3443"/>
</dbReference>
<dbReference type="KEGG" id="aby:ABAYE3443"/>
<dbReference type="HOGENOM" id="CLU_024251_2_1_6"/>
<dbReference type="UniPathway" id="UPA00109">
    <property type="reaction ID" value="UER00189"/>
</dbReference>
<dbReference type="UniPathway" id="UPA00138"/>
<dbReference type="GO" id="GO:0005829">
    <property type="term" value="C:cytosol"/>
    <property type="evidence" value="ECO:0007669"/>
    <property type="project" value="TreeGrafter"/>
</dbReference>
<dbReference type="GO" id="GO:0004807">
    <property type="term" value="F:triose-phosphate isomerase activity"/>
    <property type="evidence" value="ECO:0007669"/>
    <property type="project" value="UniProtKB-UniRule"/>
</dbReference>
<dbReference type="GO" id="GO:0006094">
    <property type="term" value="P:gluconeogenesis"/>
    <property type="evidence" value="ECO:0007669"/>
    <property type="project" value="UniProtKB-UniRule"/>
</dbReference>
<dbReference type="GO" id="GO:0046166">
    <property type="term" value="P:glyceraldehyde-3-phosphate biosynthetic process"/>
    <property type="evidence" value="ECO:0007669"/>
    <property type="project" value="TreeGrafter"/>
</dbReference>
<dbReference type="GO" id="GO:0019563">
    <property type="term" value="P:glycerol catabolic process"/>
    <property type="evidence" value="ECO:0007669"/>
    <property type="project" value="TreeGrafter"/>
</dbReference>
<dbReference type="GO" id="GO:0006096">
    <property type="term" value="P:glycolytic process"/>
    <property type="evidence" value="ECO:0007669"/>
    <property type="project" value="UniProtKB-UniRule"/>
</dbReference>
<dbReference type="CDD" id="cd00311">
    <property type="entry name" value="TIM"/>
    <property type="match status" value="1"/>
</dbReference>
<dbReference type="FunFam" id="3.20.20.70:FF:000016">
    <property type="entry name" value="Triosephosphate isomerase"/>
    <property type="match status" value="1"/>
</dbReference>
<dbReference type="Gene3D" id="3.20.20.70">
    <property type="entry name" value="Aldolase class I"/>
    <property type="match status" value="1"/>
</dbReference>
<dbReference type="HAMAP" id="MF_00147_B">
    <property type="entry name" value="TIM_B"/>
    <property type="match status" value="1"/>
</dbReference>
<dbReference type="InterPro" id="IPR013785">
    <property type="entry name" value="Aldolase_TIM"/>
</dbReference>
<dbReference type="InterPro" id="IPR035990">
    <property type="entry name" value="TIM_sf"/>
</dbReference>
<dbReference type="InterPro" id="IPR022896">
    <property type="entry name" value="TrioseP_Isoase_bac/euk"/>
</dbReference>
<dbReference type="InterPro" id="IPR000652">
    <property type="entry name" value="Triosephosphate_isomerase"/>
</dbReference>
<dbReference type="InterPro" id="IPR020861">
    <property type="entry name" value="Triosephosphate_isomerase_AS"/>
</dbReference>
<dbReference type="NCBIfam" id="TIGR00419">
    <property type="entry name" value="tim"/>
    <property type="match status" value="1"/>
</dbReference>
<dbReference type="PANTHER" id="PTHR21139">
    <property type="entry name" value="TRIOSEPHOSPHATE ISOMERASE"/>
    <property type="match status" value="1"/>
</dbReference>
<dbReference type="PANTHER" id="PTHR21139:SF42">
    <property type="entry name" value="TRIOSEPHOSPHATE ISOMERASE"/>
    <property type="match status" value="1"/>
</dbReference>
<dbReference type="Pfam" id="PF00121">
    <property type="entry name" value="TIM"/>
    <property type="match status" value="1"/>
</dbReference>
<dbReference type="SUPFAM" id="SSF51351">
    <property type="entry name" value="Triosephosphate isomerase (TIM)"/>
    <property type="match status" value="1"/>
</dbReference>
<dbReference type="PROSITE" id="PS00171">
    <property type="entry name" value="TIM_1"/>
    <property type="match status" value="1"/>
</dbReference>
<dbReference type="PROSITE" id="PS51440">
    <property type="entry name" value="TIM_2"/>
    <property type="match status" value="1"/>
</dbReference>
<gene>
    <name evidence="1" type="primary">tpiA</name>
    <name type="ordered locus">ABAYE3443</name>
</gene>
<reference key="1">
    <citation type="journal article" date="2008" name="PLoS ONE">
        <title>Comparative analysis of Acinetobacters: three genomes for three lifestyles.</title>
        <authorList>
            <person name="Vallenet D."/>
            <person name="Nordmann P."/>
            <person name="Barbe V."/>
            <person name="Poirel L."/>
            <person name="Mangenot S."/>
            <person name="Bataille E."/>
            <person name="Dossat C."/>
            <person name="Gas S."/>
            <person name="Kreimeyer A."/>
            <person name="Lenoble P."/>
            <person name="Oztas S."/>
            <person name="Poulain J."/>
            <person name="Segurens B."/>
            <person name="Robert C."/>
            <person name="Abergel C."/>
            <person name="Claverie J.-M."/>
            <person name="Raoult D."/>
            <person name="Medigue C."/>
            <person name="Weissenbach J."/>
            <person name="Cruveiller S."/>
        </authorList>
    </citation>
    <scope>NUCLEOTIDE SEQUENCE [LARGE SCALE GENOMIC DNA]</scope>
    <source>
        <strain>AYE</strain>
    </source>
</reference>